<gene>
    <name type="primary">ATG22-1</name>
    <name type="ORF">SNOG_16086/SNOG_16087</name>
</gene>
<reference key="1">
    <citation type="journal article" date="2007" name="Plant Cell">
        <title>Dothideomycete-plant interactions illuminated by genome sequencing and EST analysis of the wheat pathogen Stagonospora nodorum.</title>
        <authorList>
            <person name="Hane J.K."/>
            <person name="Lowe R.G.T."/>
            <person name="Solomon P.S."/>
            <person name="Tan K.-C."/>
            <person name="Schoch C.L."/>
            <person name="Spatafora J.W."/>
            <person name="Crous P.W."/>
            <person name="Kodira C.D."/>
            <person name="Birren B.W."/>
            <person name="Galagan J.E."/>
            <person name="Torriani S.F.F."/>
            <person name="McDonald B.A."/>
            <person name="Oliver R.P."/>
        </authorList>
    </citation>
    <scope>NUCLEOTIDE SEQUENCE [LARGE SCALE GENOMIC DNA]</scope>
    <source>
        <strain>SN15 / ATCC MYA-4574 / FGSC 10173</strain>
    </source>
</reference>
<protein>
    <recommendedName>
        <fullName>Autophagy-related protein 22-1</fullName>
    </recommendedName>
</protein>
<keyword id="KW-0029">Amino-acid transport</keyword>
<keyword id="KW-0072">Autophagy</keyword>
<keyword id="KW-0325">Glycoprotein</keyword>
<keyword id="KW-0472">Membrane</keyword>
<keyword id="KW-0812">Transmembrane</keyword>
<keyword id="KW-1133">Transmembrane helix</keyword>
<keyword id="KW-0813">Transport</keyword>
<keyword id="KW-0926">Vacuole</keyword>
<organism>
    <name type="scientific">Phaeosphaeria nodorum (strain SN15 / ATCC MYA-4574 / FGSC 10173)</name>
    <name type="common">Glume blotch fungus</name>
    <name type="synonym">Parastagonospora nodorum</name>
    <dbReference type="NCBI Taxonomy" id="321614"/>
    <lineage>
        <taxon>Eukaryota</taxon>
        <taxon>Fungi</taxon>
        <taxon>Dikarya</taxon>
        <taxon>Ascomycota</taxon>
        <taxon>Pezizomycotina</taxon>
        <taxon>Dothideomycetes</taxon>
        <taxon>Pleosporomycetidae</taxon>
        <taxon>Pleosporales</taxon>
        <taxon>Pleosporineae</taxon>
        <taxon>Phaeosphaeriaceae</taxon>
        <taxon>Parastagonospora</taxon>
    </lineage>
</organism>
<proteinExistence type="inferred from homology"/>
<feature type="chain" id="PRO_0000318030" description="Autophagy-related protein 22-1">
    <location>
        <begin position="1"/>
        <end position="566"/>
    </location>
</feature>
<feature type="transmembrane region" description="Helical" evidence="2">
    <location>
        <begin position="38"/>
        <end position="58"/>
    </location>
</feature>
<feature type="transmembrane region" description="Helical" evidence="2">
    <location>
        <begin position="110"/>
        <end position="130"/>
    </location>
</feature>
<feature type="transmembrane region" description="Helical" evidence="2">
    <location>
        <begin position="146"/>
        <end position="168"/>
    </location>
</feature>
<feature type="transmembrane region" description="Helical" evidence="2">
    <location>
        <begin position="179"/>
        <end position="199"/>
    </location>
</feature>
<feature type="transmembrane region" description="Helical" evidence="2">
    <location>
        <begin position="242"/>
        <end position="262"/>
    </location>
</feature>
<feature type="transmembrane region" description="Helical" evidence="2">
    <location>
        <begin position="278"/>
        <end position="298"/>
    </location>
</feature>
<feature type="transmembrane region" description="Helical" evidence="2">
    <location>
        <begin position="351"/>
        <end position="371"/>
    </location>
</feature>
<feature type="transmembrane region" description="Helical" evidence="2">
    <location>
        <begin position="382"/>
        <end position="402"/>
    </location>
</feature>
<feature type="transmembrane region" description="Helical" evidence="2">
    <location>
        <begin position="416"/>
        <end position="436"/>
    </location>
</feature>
<feature type="transmembrane region" description="Helical" evidence="2">
    <location>
        <begin position="451"/>
        <end position="471"/>
    </location>
</feature>
<feature type="transmembrane region" description="Helical" evidence="2">
    <location>
        <begin position="488"/>
        <end position="510"/>
    </location>
</feature>
<feature type="transmembrane region" description="Helical" evidence="2">
    <location>
        <begin position="519"/>
        <end position="539"/>
    </location>
</feature>
<feature type="region of interest" description="Disordered" evidence="3">
    <location>
        <begin position="547"/>
        <end position="566"/>
    </location>
</feature>
<feature type="glycosylation site" description="N-linked (GlcNAc...) asparagine" evidence="2">
    <location>
        <position position="103"/>
    </location>
</feature>
<feature type="glycosylation site" description="N-linked (GlcNAc...) asparagine" evidence="2">
    <location>
        <position position="200"/>
    </location>
</feature>
<dbReference type="EMBL" id="CH445367">
    <property type="protein sequence ID" value="EAT76458.2"/>
    <property type="status" value="ALT_SEQ"/>
    <property type="molecule type" value="Genomic_DNA"/>
</dbReference>
<dbReference type="EMBL" id="CH445367">
    <property type="protein sequence ID" value="EAT76459.2"/>
    <property type="status" value="ALT_SEQ"/>
    <property type="molecule type" value="Genomic_DNA"/>
</dbReference>
<dbReference type="RefSeq" id="XP_001806215.1">
    <property type="nucleotide sequence ID" value="XM_001806163.1"/>
</dbReference>
<dbReference type="RefSeq" id="XP_001806216.1">
    <property type="nucleotide sequence ID" value="XM_001806164.1"/>
</dbReference>
<dbReference type="FunCoup" id="Q0TWF4">
    <property type="interactions" value="23"/>
</dbReference>
<dbReference type="STRING" id="321614.Q0TWF4"/>
<dbReference type="GlyCosmos" id="Q0TWF4">
    <property type="glycosylation" value="2 sites, No reported glycans"/>
</dbReference>
<dbReference type="KEGG" id="pno:SNOG_16086"/>
<dbReference type="KEGG" id="pno:SNOG_16087"/>
<dbReference type="VEuPathDB" id="FungiDB:JI435_160870"/>
<dbReference type="eggNOG" id="ENOG502QR9I">
    <property type="taxonomic scope" value="Eukaryota"/>
</dbReference>
<dbReference type="InParanoid" id="Q0TWF4"/>
<dbReference type="Proteomes" id="UP000001055">
    <property type="component" value="Unassembled WGS sequence"/>
</dbReference>
<dbReference type="GO" id="GO:0005774">
    <property type="term" value="C:vacuolar membrane"/>
    <property type="evidence" value="ECO:0007669"/>
    <property type="project" value="UniProtKB-SubCell"/>
</dbReference>
<dbReference type="GO" id="GO:0032974">
    <property type="term" value="P:amino acid transmembrane export from vacuole"/>
    <property type="evidence" value="ECO:0000318"/>
    <property type="project" value="GO_Central"/>
</dbReference>
<dbReference type="GO" id="GO:0006914">
    <property type="term" value="P:autophagy"/>
    <property type="evidence" value="ECO:0007669"/>
    <property type="project" value="UniProtKB-KW"/>
</dbReference>
<dbReference type="CDD" id="cd17483">
    <property type="entry name" value="MFS_Atg22_like"/>
    <property type="match status" value="1"/>
</dbReference>
<dbReference type="Gene3D" id="1.20.1250.20">
    <property type="entry name" value="MFS general substrate transporter like domains"/>
    <property type="match status" value="1"/>
</dbReference>
<dbReference type="InterPro" id="IPR044738">
    <property type="entry name" value="Atg22"/>
</dbReference>
<dbReference type="InterPro" id="IPR024671">
    <property type="entry name" value="Atg22-like"/>
</dbReference>
<dbReference type="InterPro" id="IPR050495">
    <property type="entry name" value="ATG22/LtaA_families"/>
</dbReference>
<dbReference type="InterPro" id="IPR036259">
    <property type="entry name" value="MFS_trans_sf"/>
</dbReference>
<dbReference type="PANTHER" id="PTHR23519">
    <property type="entry name" value="AUTOPHAGY-RELATED PROTEIN 22"/>
    <property type="match status" value="1"/>
</dbReference>
<dbReference type="PANTHER" id="PTHR23519:SF3">
    <property type="entry name" value="AUTOPHAGY-RELATED PROTEIN 22-2"/>
    <property type="match status" value="1"/>
</dbReference>
<dbReference type="Pfam" id="PF11700">
    <property type="entry name" value="ATG22"/>
    <property type="match status" value="1"/>
</dbReference>
<dbReference type="SUPFAM" id="SSF103473">
    <property type="entry name" value="MFS general substrate transporter"/>
    <property type="match status" value="1"/>
</dbReference>
<accession>Q0TWF4</accession>
<accession>Q0TWF5</accession>
<sequence>MSLNSEEDEAELVQLQPRYNGEDTSATTNRELNGWYAYPIAAEVFAVVAVGAFLPVILEQLARENGYFFSDSTKSCVDHGGSRRMRAEDGLKGSEQCMIKILNSTISTSSFAMYTFSAAVIVQAVTLVCFSSFADHGPYRKKMLMAFAYTGSVASALFIFISPTVYFLAPILVIVGVTSLGCSFVLLNAFLPLLVANHANNTGAKFATADSSSDFELEALNPNTQCGQSHARSAHMSSRGVGYGYMAAVFVQVISILILWLFSKTAIQKRHPSLPIRVILLLVGMWWAALTTPTLLWLRPRPGPPLPSQEAKTLSAPTSRFRTFLFYTRFSLRSFWRTLLRAISLRQTLMFLISWFLLSDAVATISGTAVLFARTELHMGTIAIALLSITSIGSGIIGAFAWPRVQKRFSLQPKTILLCCVAGMEMIPLYGLLGFIPLFKKLGFIGLQQPWEIYPVAVLHGIVMGGVSSYARSVYAPLIPEGSEAAFFALYAVTDKGSSAFGPALVGWLVDHAGSIRPAFIFLAVLVVLPAPLLWMLDVEKGREDAKAMADGEGRGRGTYERVREE</sequence>
<evidence type="ECO:0000250" key="1"/>
<evidence type="ECO:0000255" key="2"/>
<evidence type="ECO:0000256" key="3">
    <source>
        <dbReference type="SAM" id="MobiDB-lite"/>
    </source>
</evidence>
<evidence type="ECO:0000305" key="4"/>
<comment type="function">
    <text evidence="1">Vacuolar effluxer which mediate the efflux of amino acids resulting from autophagic degradation. The release of autophagic amino acids allows the maintenance of protein synthesis and viability during nitrogen starvation (By similarity).</text>
</comment>
<comment type="subcellular location">
    <subcellularLocation>
        <location evidence="1">Vacuole membrane</location>
        <topology evidence="1">Multi-pass membrane protein</topology>
    </subcellularLocation>
    <text evidence="1">Vacuole and punctate structures.</text>
</comment>
<comment type="similarity">
    <text evidence="4">Belongs to the ATG22 family.</text>
</comment>
<comment type="sequence caution" evidence="4">
    <conflict type="erroneous gene model prediction">
        <sequence resource="EMBL-CDS" id="EAT76458"/>
    </conflict>
    <text>SNOG_16086 and SNOG_16087 have been merged into one gene.</text>
</comment>
<comment type="sequence caution" evidence="4">
    <conflict type="erroneous gene model prediction">
        <sequence resource="EMBL-CDS" id="EAT76459"/>
    </conflict>
    <text>SNOG_16086 and SNOG_16087 have been merged into one gene.</text>
</comment>
<name>AT221_PHANO</name>